<organism>
    <name type="scientific">Rickettsia peacockii (strain Rustic)</name>
    <dbReference type="NCBI Taxonomy" id="562019"/>
    <lineage>
        <taxon>Bacteria</taxon>
        <taxon>Pseudomonadati</taxon>
        <taxon>Pseudomonadota</taxon>
        <taxon>Alphaproteobacteria</taxon>
        <taxon>Rickettsiales</taxon>
        <taxon>Rickettsiaceae</taxon>
        <taxon>Rickettsieae</taxon>
        <taxon>Rickettsia</taxon>
        <taxon>spotted fever group</taxon>
    </lineage>
</organism>
<protein>
    <recommendedName>
        <fullName evidence="1">Large ribosomal subunit protein uL16</fullName>
    </recommendedName>
    <alternativeName>
        <fullName evidence="2">50S ribosomal protein L16</fullName>
    </alternativeName>
</protein>
<evidence type="ECO:0000255" key="1">
    <source>
        <dbReference type="HAMAP-Rule" id="MF_01342"/>
    </source>
</evidence>
<evidence type="ECO:0000305" key="2"/>
<dbReference type="EMBL" id="CP001227">
    <property type="protein sequence ID" value="ACR47769.1"/>
    <property type="molecule type" value="Genomic_DNA"/>
</dbReference>
<dbReference type="RefSeq" id="WP_004997806.1">
    <property type="nucleotide sequence ID" value="NC_012730.1"/>
</dbReference>
<dbReference type="SMR" id="C4K2H2"/>
<dbReference type="GeneID" id="95361479"/>
<dbReference type="KEGG" id="rpk:RPR_06195"/>
<dbReference type="HOGENOM" id="CLU_078858_2_1_5"/>
<dbReference type="Proteomes" id="UP000005015">
    <property type="component" value="Chromosome"/>
</dbReference>
<dbReference type="GO" id="GO:0022625">
    <property type="term" value="C:cytosolic large ribosomal subunit"/>
    <property type="evidence" value="ECO:0007669"/>
    <property type="project" value="TreeGrafter"/>
</dbReference>
<dbReference type="GO" id="GO:0019843">
    <property type="term" value="F:rRNA binding"/>
    <property type="evidence" value="ECO:0007669"/>
    <property type="project" value="UniProtKB-UniRule"/>
</dbReference>
<dbReference type="GO" id="GO:0003735">
    <property type="term" value="F:structural constituent of ribosome"/>
    <property type="evidence" value="ECO:0007669"/>
    <property type="project" value="InterPro"/>
</dbReference>
<dbReference type="GO" id="GO:0000049">
    <property type="term" value="F:tRNA binding"/>
    <property type="evidence" value="ECO:0007669"/>
    <property type="project" value="UniProtKB-KW"/>
</dbReference>
<dbReference type="GO" id="GO:0006412">
    <property type="term" value="P:translation"/>
    <property type="evidence" value="ECO:0007669"/>
    <property type="project" value="UniProtKB-UniRule"/>
</dbReference>
<dbReference type="CDD" id="cd01433">
    <property type="entry name" value="Ribosomal_L16_L10e"/>
    <property type="match status" value="1"/>
</dbReference>
<dbReference type="FunFam" id="3.90.1170.10:FF:000001">
    <property type="entry name" value="50S ribosomal protein L16"/>
    <property type="match status" value="1"/>
</dbReference>
<dbReference type="Gene3D" id="3.90.1170.10">
    <property type="entry name" value="Ribosomal protein L10e/L16"/>
    <property type="match status" value="1"/>
</dbReference>
<dbReference type="HAMAP" id="MF_01342">
    <property type="entry name" value="Ribosomal_uL16"/>
    <property type="match status" value="1"/>
</dbReference>
<dbReference type="InterPro" id="IPR047873">
    <property type="entry name" value="Ribosomal_uL16"/>
</dbReference>
<dbReference type="InterPro" id="IPR000114">
    <property type="entry name" value="Ribosomal_uL16_bact-type"/>
</dbReference>
<dbReference type="InterPro" id="IPR020798">
    <property type="entry name" value="Ribosomal_uL16_CS"/>
</dbReference>
<dbReference type="InterPro" id="IPR016180">
    <property type="entry name" value="Ribosomal_uL16_dom"/>
</dbReference>
<dbReference type="InterPro" id="IPR036920">
    <property type="entry name" value="Ribosomal_uL16_sf"/>
</dbReference>
<dbReference type="NCBIfam" id="TIGR01164">
    <property type="entry name" value="rplP_bact"/>
    <property type="match status" value="1"/>
</dbReference>
<dbReference type="PANTHER" id="PTHR12220">
    <property type="entry name" value="50S/60S RIBOSOMAL PROTEIN L16"/>
    <property type="match status" value="1"/>
</dbReference>
<dbReference type="PANTHER" id="PTHR12220:SF13">
    <property type="entry name" value="LARGE RIBOSOMAL SUBUNIT PROTEIN UL16M"/>
    <property type="match status" value="1"/>
</dbReference>
<dbReference type="Pfam" id="PF00252">
    <property type="entry name" value="Ribosomal_L16"/>
    <property type="match status" value="1"/>
</dbReference>
<dbReference type="PRINTS" id="PR00060">
    <property type="entry name" value="RIBOSOMALL16"/>
</dbReference>
<dbReference type="SUPFAM" id="SSF54686">
    <property type="entry name" value="Ribosomal protein L16p/L10e"/>
    <property type="match status" value="1"/>
</dbReference>
<dbReference type="PROSITE" id="PS00586">
    <property type="entry name" value="RIBOSOMAL_L16_1"/>
    <property type="match status" value="1"/>
</dbReference>
<dbReference type="PROSITE" id="PS00701">
    <property type="entry name" value="RIBOSOMAL_L16_2"/>
    <property type="match status" value="1"/>
</dbReference>
<comment type="function">
    <text evidence="1">Binds 23S rRNA and is also seen to make contacts with the A and possibly P site tRNAs.</text>
</comment>
<comment type="subunit">
    <text evidence="1">Part of the 50S ribosomal subunit.</text>
</comment>
<comment type="similarity">
    <text evidence="1">Belongs to the universal ribosomal protein uL16 family.</text>
</comment>
<name>RL16_RICPU</name>
<keyword id="KW-0687">Ribonucleoprotein</keyword>
<keyword id="KW-0689">Ribosomal protein</keyword>
<keyword id="KW-0694">RNA-binding</keyword>
<keyword id="KW-0699">rRNA-binding</keyword>
<keyword id="KW-0820">tRNA-binding</keyword>
<sequence length="136" mass="15195">MLAPKKQKFRKAHKGRVASTAKAGTTLAFGSFGLKSIDGWRVTARQIEAGRKAATRCMKRQGRLWIRIFPDVPVSKKPAEVRMGKGKGSPEFFAVRVSPGRIMFEIEGVEENVALRALELASAKLPVRTRIVRRYE</sequence>
<proteinExistence type="inferred from homology"/>
<reference key="1">
    <citation type="journal article" date="2009" name="PLoS ONE">
        <title>Genome sequence of the endosymbiont Rickettsia peacockii and comparison with virulent Rickettsia rickettsii: identification of virulence factors.</title>
        <authorList>
            <person name="Felsheim R.F."/>
            <person name="Kurtti T.J."/>
            <person name="Munderloh U.G."/>
        </authorList>
    </citation>
    <scope>NUCLEOTIDE SEQUENCE [LARGE SCALE GENOMIC DNA]</scope>
    <source>
        <strain>Rustic</strain>
    </source>
</reference>
<feature type="chain" id="PRO_1000214744" description="Large ribosomal subunit protein uL16">
    <location>
        <begin position="1"/>
        <end position="136"/>
    </location>
</feature>
<accession>C4K2H2</accession>
<gene>
    <name evidence="1" type="primary">rplP</name>
    <name type="ordered locus">RPR_06195</name>
</gene>